<protein>
    <recommendedName>
        <fullName evidence="1">Protein-methionine-sulfoxide reductase heme-binding subunit MsrQ</fullName>
    </recommendedName>
    <alternativeName>
        <fullName evidence="1">Flavocytochrome MsrQ</fullName>
    </alternativeName>
</protein>
<comment type="function">
    <text evidence="1">Part of the MsrPQ system that repairs oxidized periplasmic proteins containing methionine sulfoxide residues (Met-O), using respiratory chain electrons. Thus protects these proteins from oxidative-stress damage caused by reactive species of oxygen and chlorine generated by the host defense mechanisms. MsrPQ is essential for the maintenance of envelope integrity under bleach stress, rescuing a wide series of structurally unrelated periplasmic proteins from methionine oxidation. MsrQ provides electrons for reduction to the reductase catalytic subunit MsrP, using the quinone pool of the respiratory chain.</text>
</comment>
<comment type="cofactor">
    <cofactor evidence="1">
        <name>FMN</name>
        <dbReference type="ChEBI" id="CHEBI:58210"/>
    </cofactor>
    <text evidence="1">Binds 1 FMN per subunit.</text>
</comment>
<comment type="cofactor">
    <cofactor evidence="1">
        <name>heme b</name>
        <dbReference type="ChEBI" id="CHEBI:60344"/>
    </cofactor>
    <text evidence="1">Binds 1 heme b (iron(II)-protoporphyrin IX) group per subunit.</text>
</comment>
<comment type="subunit">
    <text evidence="1">Heterodimer of a catalytic subunit (MsrP) and a heme-binding subunit (MsrQ).</text>
</comment>
<comment type="subcellular location">
    <subcellularLocation>
        <location evidence="1">Cell inner membrane</location>
        <topology evidence="1">Multi-pass membrane protein</topology>
    </subcellularLocation>
</comment>
<comment type="similarity">
    <text evidence="1">Belongs to the MsrQ family.</text>
</comment>
<proteinExistence type="inferred from homology"/>
<evidence type="ECO:0000255" key="1">
    <source>
        <dbReference type="HAMAP-Rule" id="MF_01207"/>
    </source>
</evidence>
<reference key="1">
    <citation type="journal article" date="2002" name="Nature">
        <title>Genome sequence of the plant pathogen Ralstonia solanacearum.</title>
        <authorList>
            <person name="Salanoubat M."/>
            <person name="Genin S."/>
            <person name="Artiguenave F."/>
            <person name="Gouzy J."/>
            <person name="Mangenot S."/>
            <person name="Arlat M."/>
            <person name="Billault A."/>
            <person name="Brottier P."/>
            <person name="Camus J.-C."/>
            <person name="Cattolico L."/>
            <person name="Chandler M."/>
            <person name="Choisne N."/>
            <person name="Claudel-Renard C."/>
            <person name="Cunnac S."/>
            <person name="Demange N."/>
            <person name="Gaspin C."/>
            <person name="Lavie M."/>
            <person name="Moisan A."/>
            <person name="Robert C."/>
            <person name="Saurin W."/>
            <person name="Schiex T."/>
            <person name="Siguier P."/>
            <person name="Thebault P."/>
            <person name="Whalen M."/>
            <person name="Wincker P."/>
            <person name="Levy M."/>
            <person name="Weissenbach J."/>
            <person name="Boucher C.A."/>
        </authorList>
    </citation>
    <scope>NUCLEOTIDE SEQUENCE [LARGE SCALE GENOMIC DNA]</scope>
    <source>
        <strain>ATCC BAA-1114 / GMI1000</strain>
    </source>
</reference>
<dbReference type="EMBL" id="AL646052">
    <property type="protein sequence ID" value="CAD16689.1"/>
    <property type="molecule type" value="Genomic_DNA"/>
</dbReference>
<dbReference type="RefSeq" id="WP_011002885.1">
    <property type="nucleotide sequence ID" value="NC_003295.1"/>
</dbReference>
<dbReference type="SMR" id="Q8XV51"/>
<dbReference type="STRING" id="267608.RSc2980"/>
<dbReference type="EnsemblBacteria" id="CAD16689">
    <property type="protein sequence ID" value="CAD16689"/>
    <property type="gene ID" value="RSc2980"/>
</dbReference>
<dbReference type="KEGG" id="rso:RSc2980"/>
<dbReference type="eggNOG" id="COG2717">
    <property type="taxonomic scope" value="Bacteria"/>
</dbReference>
<dbReference type="HOGENOM" id="CLU_080662_0_1_4"/>
<dbReference type="Proteomes" id="UP000001436">
    <property type="component" value="Chromosome"/>
</dbReference>
<dbReference type="GO" id="GO:0005886">
    <property type="term" value="C:plasma membrane"/>
    <property type="evidence" value="ECO:0007669"/>
    <property type="project" value="UniProtKB-SubCell"/>
</dbReference>
<dbReference type="GO" id="GO:0009055">
    <property type="term" value="F:electron transfer activity"/>
    <property type="evidence" value="ECO:0007669"/>
    <property type="project" value="UniProtKB-UniRule"/>
</dbReference>
<dbReference type="GO" id="GO:0010181">
    <property type="term" value="F:FMN binding"/>
    <property type="evidence" value="ECO:0007669"/>
    <property type="project" value="UniProtKB-UniRule"/>
</dbReference>
<dbReference type="GO" id="GO:0020037">
    <property type="term" value="F:heme binding"/>
    <property type="evidence" value="ECO:0007669"/>
    <property type="project" value="UniProtKB-UniRule"/>
</dbReference>
<dbReference type="GO" id="GO:0046872">
    <property type="term" value="F:metal ion binding"/>
    <property type="evidence" value="ECO:0007669"/>
    <property type="project" value="UniProtKB-KW"/>
</dbReference>
<dbReference type="GO" id="GO:0016679">
    <property type="term" value="F:oxidoreductase activity, acting on diphenols and related substances as donors"/>
    <property type="evidence" value="ECO:0007669"/>
    <property type="project" value="TreeGrafter"/>
</dbReference>
<dbReference type="GO" id="GO:0030091">
    <property type="term" value="P:protein repair"/>
    <property type="evidence" value="ECO:0007669"/>
    <property type="project" value="UniProtKB-UniRule"/>
</dbReference>
<dbReference type="HAMAP" id="MF_01207">
    <property type="entry name" value="MsrQ"/>
    <property type="match status" value="1"/>
</dbReference>
<dbReference type="InterPro" id="IPR013130">
    <property type="entry name" value="Fe3_Rdtase_TM_dom"/>
</dbReference>
<dbReference type="InterPro" id="IPR022837">
    <property type="entry name" value="MsrQ-like"/>
</dbReference>
<dbReference type="NCBIfam" id="NF003836">
    <property type="entry name" value="PRK05419.2-3"/>
    <property type="match status" value="1"/>
</dbReference>
<dbReference type="PANTHER" id="PTHR36964">
    <property type="entry name" value="PROTEIN-METHIONINE-SULFOXIDE REDUCTASE HEME-BINDING SUBUNIT MSRQ"/>
    <property type="match status" value="1"/>
</dbReference>
<dbReference type="PANTHER" id="PTHR36964:SF1">
    <property type="entry name" value="PROTEIN-METHIONINE-SULFOXIDE REDUCTASE HEME-BINDING SUBUNIT MSRQ"/>
    <property type="match status" value="1"/>
</dbReference>
<dbReference type="Pfam" id="PF01794">
    <property type="entry name" value="Ferric_reduct"/>
    <property type="match status" value="1"/>
</dbReference>
<gene>
    <name evidence="1" type="primary">msrQ</name>
    <name type="ordered locus">RSc2980</name>
    <name type="ORF">RS01266</name>
</gene>
<accession>Q8XV51</accession>
<feature type="chain" id="PRO_0000091581" description="Protein-methionine-sulfoxide reductase heme-binding subunit MsrQ">
    <location>
        <begin position="1"/>
        <end position="217"/>
    </location>
</feature>
<feature type="transmembrane region" description="Helical" evidence="1">
    <location>
        <begin position="82"/>
        <end position="102"/>
    </location>
</feature>
<feature type="transmembrane region" description="Helical" evidence="1">
    <location>
        <begin position="118"/>
        <end position="138"/>
    </location>
</feature>
<feature type="transmembrane region" description="Helical" evidence="1">
    <location>
        <begin position="150"/>
        <end position="170"/>
    </location>
</feature>
<feature type="transmembrane region" description="Helical" evidence="1">
    <location>
        <begin position="180"/>
        <end position="200"/>
    </location>
</feature>
<organism>
    <name type="scientific">Ralstonia nicotianae (strain ATCC BAA-1114 / GMI1000)</name>
    <name type="common">Ralstonia solanacearum</name>
    <dbReference type="NCBI Taxonomy" id="267608"/>
    <lineage>
        <taxon>Bacteria</taxon>
        <taxon>Pseudomonadati</taxon>
        <taxon>Pseudomonadota</taxon>
        <taxon>Betaproteobacteria</taxon>
        <taxon>Burkholderiales</taxon>
        <taxon>Burkholderiaceae</taxon>
        <taxon>Ralstonia</taxon>
        <taxon>Ralstonia solanacearum species complex</taxon>
    </lineage>
</organism>
<sequence>MLPSMLPPKSLRAVRIAVWLLALVPFLRLVVLGATDRYGANPLEFVTRSTGTWTLVLLCCTLAVTPLRRLTGMNWLIRIRRMLGLYTFFYGTLHFLIWLLVDRGLDPASMVKDIAKRPFITVGFAAFVLMIPLAATSTNAMVRRLGGRRWQWLHRLVYVTGVLGILHYWWHKAGKHDFAEVSIYAAVMAVLLGLRVWWVWRGARQGAIAGGAVPLRD</sequence>
<keyword id="KW-0997">Cell inner membrane</keyword>
<keyword id="KW-1003">Cell membrane</keyword>
<keyword id="KW-0249">Electron transport</keyword>
<keyword id="KW-0285">Flavoprotein</keyword>
<keyword id="KW-0288">FMN</keyword>
<keyword id="KW-0349">Heme</keyword>
<keyword id="KW-0408">Iron</keyword>
<keyword id="KW-0472">Membrane</keyword>
<keyword id="KW-0479">Metal-binding</keyword>
<keyword id="KW-1185">Reference proteome</keyword>
<keyword id="KW-0812">Transmembrane</keyword>
<keyword id="KW-1133">Transmembrane helix</keyword>
<keyword id="KW-0813">Transport</keyword>
<name>MSRQ_RALN1</name>